<feature type="chain" id="PRO_0000086476" description="Serine/threonine-protein kinase PAK 6">
    <location>
        <begin position="1"/>
        <end position="681"/>
    </location>
</feature>
<feature type="domain" description="CRIB" evidence="2">
    <location>
        <begin position="12"/>
        <end position="25"/>
    </location>
</feature>
<feature type="domain" description="Protein kinase" evidence="3">
    <location>
        <begin position="407"/>
        <end position="658"/>
    </location>
</feature>
<feature type="region of interest" description="Disordered" evidence="4">
    <location>
        <begin position="1"/>
        <end position="30"/>
    </location>
</feature>
<feature type="region of interest" description="Linker">
    <location>
        <begin position="26"/>
        <end position="406"/>
    </location>
</feature>
<feature type="region of interest" description="Disordered" evidence="4">
    <location>
        <begin position="149"/>
        <end position="169"/>
    </location>
</feature>
<feature type="region of interest" description="Disordered" evidence="4">
    <location>
        <begin position="200"/>
        <end position="256"/>
    </location>
</feature>
<feature type="region of interest" description="Disordered" evidence="4">
    <location>
        <begin position="268"/>
        <end position="355"/>
    </location>
</feature>
<feature type="compositionally biased region" description="Low complexity" evidence="4">
    <location>
        <begin position="201"/>
        <end position="212"/>
    </location>
</feature>
<feature type="compositionally biased region" description="Low complexity" evidence="4">
    <location>
        <begin position="268"/>
        <end position="278"/>
    </location>
</feature>
<feature type="compositionally biased region" description="Polar residues" evidence="4">
    <location>
        <begin position="308"/>
        <end position="333"/>
    </location>
</feature>
<feature type="active site" description="Proton acceptor" evidence="3">
    <location>
        <position position="526"/>
    </location>
</feature>
<feature type="binding site" evidence="3">
    <location>
        <begin position="413"/>
        <end position="421"/>
    </location>
    <ligand>
        <name>ATP</name>
        <dbReference type="ChEBI" id="CHEBI:30616"/>
    </ligand>
</feature>
<feature type="binding site" evidence="3">
    <location>
        <position position="436"/>
    </location>
    <ligand>
        <name>ATP</name>
        <dbReference type="ChEBI" id="CHEBI:30616"/>
    </ligand>
</feature>
<feature type="modified residue" description="Phosphoserine; by autocatalysis" evidence="1">
    <location>
        <position position="560"/>
    </location>
</feature>
<feature type="splice variant" id="VSP_056733" description="In isoform 2." evidence="15">
    <location>
        <begin position="583"/>
        <end position="627"/>
    </location>
</feature>
<feature type="sequence variant" id="VAR_035631" description="In a colorectal cancer sample; somatic mutation; dbSNP:rs201346085." evidence="9">
    <original>R</original>
    <variation>H</variation>
    <location>
        <position position="3"/>
    </location>
</feature>
<feature type="sequence variant" id="VAR_019993" description="In dbSNP:rs2412504." evidence="10">
    <original>M</original>
    <variation>V</variation>
    <location>
        <position position="76"/>
    </location>
</feature>
<feature type="sequence variant" id="VAR_051655" description="In dbSNP:rs36081263.">
    <original>R</original>
    <variation>C</variation>
    <location>
        <position position="103"/>
    </location>
</feature>
<feature type="sequence variant" id="VAR_051656" description="In dbSNP:rs35593179.">
    <original>T</original>
    <variation>I</variation>
    <location>
        <position position="151"/>
    </location>
</feature>
<feature type="sequence variant" id="VAR_040972" description="In dbSNP:rs56349744." evidence="10">
    <original>E</original>
    <variation>K</variation>
    <location>
        <position position="184"/>
    </location>
</feature>
<feature type="sequence variant" id="VAR_040973" description="In dbSNP:rs55920845." evidence="10">
    <original>G</original>
    <variation>E</variation>
    <location>
        <position position="205"/>
    </location>
</feature>
<feature type="sequence variant" id="VAR_040974" description="In dbSNP:rs35501648." evidence="10">
    <original>P</original>
    <variation>T</variation>
    <location>
        <position position="208"/>
    </location>
</feature>
<feature type="sequence variant" id="VAR_040975" description="In dbSNP:rs34869667." evidence="10">
    <original>T</original>
    <variation>M</variation>
    <location>
        <position position="210"/>
    </location>
</feature>
<feature type="sequence variant" id="VAR_019994" description="In dbSNP:rs3743135." evidence="10">
    <original>H</original>
    <variation>R</variation>
    <location>
        <position position="215"/>
    </location>
</feature>
<feature type="sequence variant" id="VAR_019995" description="In dbSNP:rs3743137." evidence="10">
    <original>P</original>
    <variation>L</variation>
    <location>
        <position position="337"/>
    </location>
</feature>
<feature type="sequence variant" id="VAR_040976" description="In dbSNP:rs55806501." evidence="10">
    <original>A</original>
    <variation>V</variation>
    <location>
        <position position="376"/>
    </location>
</feature>
<feature type="sequence variant" id="VAR_051657" description="In dbSNP:rs34445577.">
    <original>E</original>
    <variation>K</variation>
    <location>
        <position position="475"/>
    </location>
</feature>
<feature type="sequence variant" id="VAR_040977" description="In a lung small cell carcinoma sample; somatic mutation." evidence="10">
    <original>L</original>
    <variation>R</variation>
    <location>
        <position position="514"/>
    </location>
</feature>
<feature type="mutagenesis site" description="Almost complete loss of PAK6 activation by MAP2K6/MAPKK6; when associated with F-566." evidence="8">
    <original>S</original>
    <variation>A</variation>
    <location>
        <position position="165"/>
    </location>
</feature>
<feature type="mutagenesis site" description="Complete loss of PAK6 activation by MAP2K6/MAPKK6; when associated with A-165." evidence="8">
    <original>S</original>
    <variation>A</variation>
    <location>
        <position position="560"/>
    </location>
</feature>
<feature type="mutagenesis site" description="Complete loss of PAK6 activation by MAP2K6/MAPKK6; when associated with A-165." evidence="8">
    <original>Y</original>
    <variation>F</variation>
    <location>
        <position position="566"/>
    </location>
</feature>
<feature type="sequence conflict" description="In Ref. 3; BAG54772." evidence="16" ref="3">
    <original>T</original>
    <variation>A</variation>
    <location>
        <position position="60"/>
    </location>
</feature>
<feature type="sequence conflict" description="In Ref. 3; BAG54772." evidence="16" ref="3">
    <original>D</original>
    <variation>G</variation>
    <location>
        <position position="381"/>
    </location>
</feature>
<feature type="strand" evidence="18">
    <location>
        <begin position="16"/>
        <end position="27"/>
    </location>
</feature>
<feature type="turn" evidence="18">
    <location>
        <begin position="28"/>
        <end position="31"/>
    </location>
</feature>
<feature type="strand" evidence="18">
    <location>
        <begin position="32"/>
        <end position="35"/>
    </location>
</feature>
<feature type="helix" evidence="18">
    <location>
        <begin position="38"/>
        <end position="44"/>
    </location>
</feature>
<feature type="helix" evidence="19">
    <location>
        <begin position="387"/>
        <end position="395"/>
    </location>
</feature>
<feature type="helix" evidence="19">
    <location>
        <begin position="404"/>
        <end position="406"/>
    </location>
</feature>
<feature type="strand" evidence="19">
    <location>
        <begin position="407"/>
        <end position="416"/>
    </location>
</feature>
<feature type="strand" evidence="19">
    <location>
        <begin position="419"/>
        <end position="426"/>
    </location>
</feature>
<feature type="turn" evidence="19">
    <location>
        <begin position="427"/>
        <end position="429"/>
    </location>
</feature>
<feature type="strand" evidence="19">
    <location>
        <begin position="432"/>
        <end position="439"/>
    </location>
</feature>
<feature type="turn" evidence="17">
    <location>
        <begin position="440"/>
        <end position="442"/>
    </location>
</feature>
<feature type="helix" evidence="19">
    <location>
        <begin position="446"/>
        <end position="448"/>
    </location>
</feature>
<feature type="helix" evidence="19">
    <location>
        <begin position="449"/>
        <end position="458"/>
    </location>
</feature>
<feature type="strand" evidence="19">
    <location>
        <begin position="467"/>
        <end position="473"/>
    </location>
</feature>
<feature type="strand" evidence="19">
    <location>
        <begin position="476"/>
        <end position="481"/>
    </location>
</feature>
<feature type="helix" evidence="19">
    <location>
        <begin position="489"/>
        <end position="493"/>
    </location>
</feature>
<feature type="helix" evidence="19">
    <location>
        <begin position="500"/>
        <end position="519"/>
    </location>
</feature>
<feature type="helix" evidence="19">
    <location>
        <begin position="529"/>
        <end position="531"/>
    </location>
</feature>
<feature type="strand" evidence="19">
    <location>
        <begin position="532"/>
        <end position="534"/>
    </location>
</feature>
<feature type="strand" evidence="19">
    <location>
        <begin position="540"/>
        <end position="542"/>
    </location>
</feature>
<feature type="helix" evidence="19">
    <location>
        <begin position="545"/>
        <end position="547"/>
    </location>
</feature>
<feature type="strand" evidence="19">
    <location>
        <begin position="553"/>
        <end position="555"/>
    </location>
</feature>
<feature type="helix" evidence="19">
    <location>
        <begin position="565"/>
        <end position="567"/>
    </location>
</feature>
<feature type="helix" evidence="19">
    <location>
        <begin position="570"/>
        <end position="573"/>
    </location>
</feature>
<feature type="helix" evidence="19">
    <location>
        <begin position="581"/>
        <end position="596"/>
    </location>
</feature>
<feature type="turn" evidence="19">
    <location>
        <begin position="600"/>
        <end position="603"/>
    </location>
</feature>
<feature type="helix" evidence="19">
    <location>
        <begin position="606"/>
        <end position="615"/>
    </location>
</feature>
<feature type="helix" evidence="19">
    <location>
        <begin position="624"/>
        <end position="626"/>
    </location>
</feature>
<feature type="helix" evidence="19">
    <location>
        <begin position="629"/>
        <end position="638"/>
    </location>
</feature>
<feature type="turn" evidence="19">
    <location>
        <begin position="643"/>
        <end position="645"/>
    </location>
</feature>
<feature type="helix" evidence="19">
    <location>
        <begin position="649"/>
        <end position="653"/>
    </location>
</feature>
<feature type="helix" evidence="19">
    <location>
        <begin position="656"/>
        <end position="660"/>
    </location>
</feature>
<feature type="helix" evidence="19">
    <location>
        <begin position="664"/>
        <end position="670"/>
    </location>
</feature>
<comment type="function">
    <text evidence="7 12">Serine/threonine protein kinase that plays a role in the regulation of gene transcription. The kinase activity is induced by various effectors including AR or MAP2K6/MAPKK6. Phosphorylates the DNA-binding domain of androgen receptor/AR and thereby inhibits AR-mediated transcription. Also inhibits ESR1-mediated transcription. May play a role in cytoskeleton regulation by interacting with IQGAP1. May protect cells from apoptosis through phosphorylation of BAD.</text>
</comment>
<comment type="catalytic activity">
    <reaction>
        <text>L-seryl-[protein] + ATP = O-phospho-L-seryl-[protein] + ADP + H(+)</text>
        <dbReference type="Rhea" id="RHEA:17989"/>
        <dbReference type="Rhea" id="RHEA-COMP:9863"/>
        <dbReference type="Rhea" id="RHEA-COMP:11604"/>
        <dbReference type="ChEBI" id="CHEBI:15378"/>
        <dbReference type="ChEBI" id="CHEBI:29999"/>
        <dbReference type="ChEBI" id="CHEBI:30616"/>
        <dbReference type="ChEBI" id="CHEBI:83421"/>
        <dbReference type="ChEBI" id="CHEBI:456216"/>
        <dbReference type="EC" id="2.7.11.1"/>
    </reaction>
</comment>
<comment type="catalytic activity">
    <reaction>
        <text>L-threonyl-[protein] + ATP = O-phospho-L-threonyl-[protein] + ADP + H(+)</text>
        <dbReference type="Rhea" id="RHEA:46608"/>
        <dbReference type="Rhea" id="RHEA-COMP:11060"/>
        <dbReference type="Rhea" id="RHEA-COMP:11605"/>
        <dbReference type="ChEBI" id="CHEBI:15378"/>
        <dbReference type="ChEBI" id="CHEBI:30013"/>
        <dbReference type="ChEBI" id="CHEBI:30616"/>
        <dbReference type="ChEBI" id="CHEBI:61977"/>
        <dbReference type="ChEBI" id="CHEBI:456216"/>
        <dbReference type="EC" id="2.7.11.1"/>
    </reaction>
</comment>
<comment type="subunit">
    <text evidence="1 5 6 11 14">Interacts tightly with GTP-bound but not GDP-bound CDC42/p21 and RAC1 (By similarity). Interacts with the androgen receptor AR and the estrogen receptor ESR1. Interacts with IQGAP1 and PPM1B.</text>
</comment>
<comment type="interaction">
    <interactant intactId="EBI-1053685">
        <id>Q9NQU5</id>
    </interactant>
    <interactant intactId="EBI-81752">
        <id>P60953</id>
        <label>CDC42</label>
    </interactant>
    <organismsDiffer>false</organismsDiffer>
    <experiments>4</experiments>
</comment>
<comment type="interaction">
    <interactant intactId="EBI-1053685">
        <id>Q9NQU5</id>
    </interactant>
    <interactant intactId="EBI-7116203">
        <id>O75031</id>
        <label>HSF2BP</label>
    </interactant>
    <organismsDiffer>false</organismsDiffer>
    <experiments>3</experiments>
</comment>
<comment type="interaction">
    <interactant intactId="EBI-1053685">
        <id>Q9NQU5</id>
    </interactant>
    <interactant intactId="EBI-5323863">
        <id>Q5S007</id>
        <label>LRRK2</label>
    </interactant>
    <organismsDiffer>false</organismsDiffer>
    <experiments>2</experiments>
</comment>
<comment type="interaction">
    <interactant intactId="EBI-1053685">
        <id>Q9NQU5</id>
    </interactant>
    <interactant intactId="EBI-6285694">
        <id>Q9H4E5</id>
        <label>RHOJ</label>
    </interactant>
    <organismsDiffer>false</organismsDiffer>
    <experiments>4</experiments>
</comment>
<comment type="interaction">
    <interactant intactId="EBI-1053685">
        <id>Q9NQU5</id>
    </interactant>
    <interactant intactId="EBI-8538631">
        <id>Q96L33</id>
        <label>RHOV</label>
    </interactant>
    <organismsDiffer>false</organismsDiffer>
    <experiments>3</experiments>
</comment>
<comment type="interaction">
    <interactant intactId="EBI-1053685">
        <id>Q9NQU5</id>
    </interactant>
    <interactant intactId="EBI-356498">
        <id>P62258</id>
        <label>YWHAE</label>
    </interactant>
    <organismsDiffer>false</organismsDiffer>
    <experiments>5</experiments>
</comment>
<comment type="subcellular location">
    <subcellularLocation>
        <location>Cytoplasm</location>
    </subcellularLocation>
    <subcellularLocation>
        <location>Nucleus</location>
    </subcellularLocation>
    <text>Cotranslocates into nucleus with AR in response to androgen induction.</text>
</comment>
<comment type="alternative products">
    <event type="alternative splicing"/>
    <isoform>
        <id>Q9NQU5-1</id>
        <name>1</name>
        <sequence type="displayed"/>
    </isoform>
    <isoform>
        <id>Q9NQU5-2</id>
        <name>2</name>
        <sequence type="described" ref="VSP_056733"/>
    </isoform>
</comment>
<comment type="tissue specificity">
    <text evidence="5 6">Selectively expressed in brain and testis, with lower levels in multiple tissues including prostate and breast.</text>
</comment>
<comment type="PTM">
    <text evidence="8 13">Autophosphorylated. Phosphorylated by MAP2K6//MAPKK6, leading to PAK6 activation.</text>
</comment>
<comment type="similarity">
    <text evidence="16">Belongs to the protein kinase superfamily. STE Ser/Thr protein kinase family. STE20 subfamily.</text>
</comment>
<name>PAK6_HUMAN</name>
<organism>
    <name type="scientific">Homo sapiens</name>
    <name type="common">Human</name>
    <dbReference type="NCBI Taxonomy" id="9606"/>
    <lineage>
        <taxon>Eukaryota</taxon>
        <taxon>Metazoa</taxon>
        <taxon>Chordata</taxon>
        <taxon>Craniata</taxon>
        <taxon>Vertebrata</taxon>
        <taxon>Euteleostomi</taxon>
        <taxon>Mammalia</taxon>
        <taxon>Eutheria</taxon>
        <taxon>Euarchontoglires</taxon>
        <taxon>Primates</taxon>
        <taxon>Haplorrhini</taxon>
        <taxon>Catarrhini</taxon>
        <taxon>Hominidae</taxon>
        <taxon>Homo</taxon>
    </lineage>
</organism>
<sequence length="681" mass="74869">MFRKKKKKRPEISAPQNFQHRVHTSFDPKEGKFVGLPPQWQNILDTLRRPKPVVDPSRITRVQLQPMKTVVRGSAMPVDGYISGLLNDIQKLSVISSNTLRGRSPTSRRRAQSLGLLGDEHWATDPDMYLQSPQSERTDPHGLYLSCNGGTPAGHKQMPWPEPQSPRVLPNGLAAKAQSLGPAEFQGASQRCLQLGACLQSSPPGASPPTGTNRHGMKAAKHGSEEARPQSCLVGSATGRPGGEGSPSPKTRESSLKRRLFRSMFLSTAATAPPSSSKPGPPPQSKPNSSFRPPQKDNPPSLVAKAQSLPSDQPVGTFSPLTTSDTSSPQKSLRTAPATGQLPGRSSPAGSPRTWHAQISTSNLYLPQDPTVAKGALAGEDTGVVTHEQFKAALRMVVDQGDPRLLLDSYVKIGEGSTGIVCLAREKHSGRQVAVKMMDLRKQQRRELLFNEVVIMRDYQHFNVVEMYKSYLVGEELWVLMEFLQGGALTDIVSQVRLNEEQIATVCEAVLQALAYLHAQGVIHRDIKSDSILLTLDGRVKLSDFGFCAQISKDVPKRKSLVGTPYWMAPEVISRSLYATEVDIWSLGIMVIEMVDGEPPYFSDSPVQAMKRLRDSPPPKLKNSHKVSPVLRDFLERMLVRDPQERATAQELLDHPFLLQTGLPECLVPLIQLYRKQTSTC</sequence>
<protein>
    <recommendedName>
        <fullName>Serine/threonine-protein kinase PAK 6</fullName>
        <ecNumber>2.7.11.1</ecNumber>
    </recommendedName>
    <alternativeName>
        <fullName>PAK-5</fullName>
    </alternativeName>
    <alternativeName>
        <fullName>p21-activated kinase 6</fullName>
        <shortName>PAK-6</shortName>
    </alternativeName>
</protein>
<accession>Q9NQU5</accession>
<accession>A8K2G2</accession>
<accession>B3KYB0</accession>
<accession>G5E9R2</accession>
<dbReference type="EC" id="2.7.11.1"/>
<dbReference type="EMBL" id="AF276893">
    <property type="protein sequence ID" value="AAF82800.1"/>
    <property type="molecule type" value="mRNA"/>
</dbReference>
<dbReference type="EMBL" id="AJ236915">
    <property type="protein sequence ID" value="CAC18720.1"/>
    <property type="molecule type" value="mRNA"/>
</dbReference>
<dbReference type="EMBL" id="AK131522">
    <property type="protein sequence ID" value="BAG54772.1"/>
    <property type="molecule type" value="mRNA"/>
</dbReference>
<dbReference type="EMBL" id="AK290227">
    <property type="protein sequence ID" value="BAF82916.1"/>
    <property type="molecule type" value="mRNA"/>
</dbReference>
<dbReference type="EMBL" id="AK315813">
    <property type="protein sequence ID" value="BAF98704.1"/>
    <property type="molecule type" value="mRNA"/>
</dbReference>
<dbReference type="EMBL" id="AK315817">
    <property type="protein sequence ID" value="BAF98708.1"/>
    <property type="molecule type" value="mRNA"/>
</dbReference>
<dbReference type="EMBL" id="AC020658">
    <property type="status" value="NOT_ANNOTATED_CDS"/>
    <property type="molecule type" value="Genomic_DNA"/>
</dbReference>
<dbReference type="EMBL" id="AC025429">
    <property type="status" value="NOT_ANNOTATED_CDS"/>
    <property type="molecule type" value="Genomic_DNA"/>
</dbReference>
<dbReference type="EMBL" id="CH471125">
    <property type="protein sequence ID" value="EAW92395.1"/>
    <property type="molecule type" value="Genomic_DNA"/>
</dbReference>
<dbReference type="EMBL" id="CH471125">
    <property type="protein sequence ID" value="EAW92401.1"/>
    <property type="molecule type" value="Genomic_DNA"/>
</dbReference>
<dbReference type="EMBL" id="BC035596">
    <property type="protein sequence ID" value="AAH35596.1"/>
    <property type="molecule type" value="mRNA"/>
</dbReference>
<dbReference type="CCDS" id="CCDS61590.1">
    <molecule id="Q9NQU5-2"/>
</dbReference>
<dbReference type="RefSeq" id="NP_001122100.1">
    <molecule id="Q9NQU5-1"/>
    <property type="nucleotide sequence ID" value="NM_001128628.2"/>
</dbReference>
<dbReference type="RefSeq" id="NP_001122101.1">
    <molecule id="Q9NQU5-1"/>
    <property type="nucleotide sequence ID" value="NM_001128629.2"/>
</dbReference>
<dbReference type="RefSeq" id="NP_001263646.1">
    <molecule id="Q9NQU5-1"/>
    <property type="nucleotide sequence ID" value="NM_001276717.1"/>
</dbReference>
<dbReference type="RefSeq" id="NP_001263647.1">
    <molecule id="Q9NQU5-2"/>
    <property type="nucleotide sequence ID" value="NM_001276718.2"/>
</dbReference>
<dbReference type="RefSeq" id="NP_001382359.1">
    <molecule id="Q9NQU5-1"/>
    <property type="nucleotide sequence ID" value="NM_001395430.1"/>
</dbReference>
<dbReference type="RefSeq" id="NP_001382360.1">
    <molecule id="Q9NQU5-1"/>
    <property type="nucleotide sequence ID" value="NM_001395431.1"/>
</dbReference>
<dbReference type="RefSeq" id="NP_064553.1">
    <molecule id="Q9NQU5-1"/>
    <property type="nucleotide sequence ID" value="NM_020168.6"/>
</dbReference>
<dbReference type="PDB" id="2C30">
    <property type="method" value="X-ray"/>
    <property type="resolution" value="1.60 A"/>
    <property type="chains" value="A=383-681"/>
</dbReference>
<dbReference type="PDB" id="2ODB">
    <property type="method" value="X-ray"/>
    <property type="resolution" value="2.40 A"/>
    <property type="chains" value="B=11-45"/>
</dbReference>
<dbReference type="PDB" id="4KS7">
    <property type="method" value="X-ray"/>
    <property type="resolution" value="1.40 A"/>
    <property type="chains" value="A=385-674"/>
</dbReference>
<dbReference type="PDB" id="4KS8">
    <property type="method" value="X-ray"/>
    <property type="resolution" value="1.95 A"/>
    <property type="chains" value="A=385-674"/>
</dbReference>
<dbReference type="PDB" id="6QDR">
    <property type="method" value="X-ray"/>
    <property type="resolution" value="1.61 A"/>
    <property type="chains" value="B=94-104"/>
</dbReference>
<dbReference type="PDB" id="6QDS">
    <property type="method" value="X-ray"/>
    <property type="resolution" value="1.72 A"/>
    <property type="chains" value="B=94-104"/>
</dbReference>
<dbReference type="PDBsum" id="2C30"/>
<dbReference type="PDBsum" id="2ODB"/>
<dbReference type="PDBsum" id="4KS7"/>
<dbReference type="PDBsum" id="4KS8"/>
<dbReference type="PDBsum" id="6QDR"/>
<dbReference type="PDBsum" id="6QDS"/>
<dbReference type="SMR" id="Q9NQU5"/>
<dbReference type="BioGRID" id="121251">
    <property type="interactions" value="75"/>
</dbReference>
<dbReference type="CORUM" id="Q9NQU5"/>
<dbReference type="FunCoup" id="Q9NQU5">
    <property type="interactions" value="1335"/>
</dbReference>
<dbReference type="IntAct" id="Q9NQU5">
    <property type="interactions" value="64"/>
</dbReference>
<dbReference type="MINT" id="Q9NQU5"/>
<dbReference type="STRING" id="9606.ENSP00000453858"/>
<dbReference type="BindingDB" id="Q9NQU5"/>
<dbReference type="ChEMBL" id="CHEMBL4311"/>
<dbReference type="DrugBank" id="DB12010">
    <property type="generic name" value="Fostamatinib"/>
</dbReference>
<dbReference type="DrugCentral" id="Q9NQU5"/>
<dbReference type="GuidetoPHARMACOLOGY" id="2137"/>
<dbReference type="iPTMnet" id="Q9NQU5"/>
<dbReference type="PhosphoSitePlus" id="Q9NQU5"/>
<dbReference type="BioMuta" id="PAK6"/>
<dbReference type="DMDM" id="23396789"/>
<dbReference type="jPOST" id="Q9NQU5"/>
<dbReference type="MassIVE" id="Q9NQU5"/>
<dbReference type="PaxDb" id="9606-ENSP00000406873"/>
<dbReference type="PeptideAtlas" id="Q9NQU5"/>
<dbReference type="ProteomicsDB" id="34018"/>
<dbReference type="ProteomicsDB" id="82189">
    <molecule id="Q9NQU5-1"/>
</dbReference>
<dbReference type="Antibodypedia" id="10054">
    <property type="antibodies" value="517 antibodies from 39 providers"/>
</dbReference>
<dbReference type="DNASU" id="56924"/>
<dbReference type="Ensembl" id="ENST00000260404.8">
    <molecule id="Q9NQU5-1"/>
    <property type="protein sequence ID" value="ENSP00000260404.4"/>
    <property type="gene ID" value="ENSG00000137843.12"/>
</dbReference>
<dbReference type="Ensembl" id="ENST00000441369.6">
    <molecule id="Q9NQU5-1"/>
    <property type="protein sequence ID" value="ENSP00000406873.1"/>
    <property type="gene ID" value="ENSG00000137843.12"/>
</dbReference>
<dbReference type="Ensembl" id="ENST00000453867.7">
    <molecule id="Q9NQU5-1"/>
    <property type="protein sequence ID" value="ENSP00000401153.3"/>
    <property type="gene ID" value="ENSG00000137843.12"/>
</dbReference>
<dbReference type="Ensembl" id="ENST00000455577.6">
    <molecule id="Q9NQU5-2"/>
    <property type="protein sequence ID" value="ENSP00000409465.2"/>
    <property type="gene ID" value="ENSG00000137843.12"/>
</dbReference>
<dbReference type="Ensembl" id="ENST00000542403.3">
    <molecule id="Q9NQU5-1"/>
    <property type="protein sequence ID" value="ENSP00000439597.2"/>
    <property type="gene ID" value="ENSG00000137843.12"/>
</dbReference>
<dbReference type="Ensembl" id="ENST00000558658.6">
    <molecule id="Q9NQU5-1"/>
    <property type="protein sequence ID" value="ENSP00000456785.2"/>
    <property type="gene ID" value="ENSG00000137843.12"/>
</dbReference>
<dbReference type="Ensembl" id="ENST00000560346.6">
    <molecule id="Q9NQU5-1"/>
    <property type="protein sequence ID" value="ENSP00000453858.1"/>
    <property type="gene ID" value="ENSG00000137843.12"/>
</dbReference>
<dbReference type="GeneID" id="106821730"/>
<dbReference type="GeneID" id="56924"/>
<dbReference type="KEGG" id="hsa:106821730"/>
<dbReference type="KEGG" id="hsa:56924"/>
<dbReference type="MANE-Select" id="ENST00000560346.6">
    <property type="protein sequence ID" value="ENSP00000453858.1"/>
    <property type="RefSeq nucleotide sequence ID" value="NM_001395430.1"/>
    <property type="RefSeq protein sequence ID" value="NP_001382359.1"/>
</dbReference>
<dbReference type="UCSC" id="uc001zky.5">
    <molecule id="Q9NQU5-1"/>
    <property type="organism name" value="human"/>
</dbReference>
<dbReference type="AGR" id="HGNC:16061"/>
<dbReference type="AGR" id="HGNC:52276"/>
<dbReference type="CTD" id="106821730"/>
<dbReference type="CTD" id="56924"/>
<dbReference type="DisGeNET" id="106821730"/>
<dbReference type="DisGeNET" id="56924"/>
<dbReference type="GeneCards" id="PAK6"/>
<dbReference type="HGNC" id="HGNC:16061">
    <property type="gene designation" value="PAK6"/>
</dbReference>
<dbReference type="HPA" id="ENSG00000137843">
    <property type="expression patterns" value="Tissue enhanced (brain, skin)"/>
</dbReference>
<dbReference type="MalaCards" id="PAK6"/>
<dbReference type="MIM" id="608110">
    <property type="type" value="gene"/>
</dbReference>
<dbReference type="neXtProt" id="NX_Q9NQU5"/>
<dbReference type="OpenTargets" id="ENSG00000137843"/>
<dbReference type="PharmGKB" id="PA32921"/>
<dbReference type="VEuPathDB" id="HostDB:ENSG00000137843"/>
<dbReference type="eggNOG" id="KOG0578">
    <property type="taxonomic scope" value="Eukaryota"/>
</dbReference>
<dbReference type="GeneTree" id="ENSGT00940000156528"/>
<dbReference type="HOGENOM" id="CLU_000288_26_6_1"/>
<dbReference type="InParanoid" id="Q9NQU5"/>
<dbReference type="OMA" id="ARRQTMW"/>
<dbReference type="OrthoDB" id="1022360at2759"/>
<dbReference type="PAN-GO" id="Q9NQU5">
    <property type="GO annotations" value="5 GO annotations based on evolutionary models"/>
</dbReference>
<dbReference type="PhylomeDB" id="Q9NQU5"/>
<dbReference type="TreeFam" id="TF105352"/>
<dbReference type="PathwayCommons" id="Q9NQU5"/>
<dbReference type="Reactome" id="R-HSA-428540">
    <property type="pathway name" value="Activation of RAC1"/>
</dbReference>
<dbReference type="Reactome" id="R-HSA-9013148">
    <property type="pathway name" value="CDC42 GTPase cycle"/>
</dbReference>
<dbReference type="Reactome" id="R-HSA-9013149">
    <property type="pathway name" value="RAC1 GTPase cycle"/>
</dbReference>
<dbReference type="Reactome" id="R-HSA-9013405">
    <property type="pathway name" value="RHOD GTPase cycle"/>
</dbReference>
<dbReference type="Reactome" id="R-HSA-9013407">
    <property type="pathway name" value="RHOH GTPase cycle"/>
</dbReference>
<dbReference type="Reactome" id="R-HSA-9013424">
    <property type="pathway name" value="RHOV GTPase cycle"/>
</dbReference>
<dbReference type="SignaLink" id="Q9NQU5"/>
<dbReference type="SIGNOR" id="Q9NQU5"/>
<dbReference type="BioGRID-ORCS" id="106821730">
    <property type="hits" value="1 hit in 22 CRISPR screens"/>
</dbReference>
<dbReference type="BioGRID-ORCS" id="56924">
    <property type="hits" value="21 hits in 1182 CRISPR screens"/>
</dbReference>
<dbReference type="ChiTaRS" id="PAK6">
    <property type="organism name" value="human"/>
</dbReference>
<dbReference type="EvolutionaryTrace" id="Q9NQU5"/>
<dbReference type="GeneWiki" id="PAK6"/>
<dbReference type="Pharos" id="Q9NQU5">
    <property type="development level" value="Tchem"/>
</dbReference>
<dbReference type="PRO" id="PR:Q9NQU5"/>
<dbReference type="Proteomes" id="UP000005640">
    <property type="component" value="Chromosome 15"/>
</dbReference>
<dbReference type="RNAct" id="Q9NQU5">
    <property type="molecule type" value="protein"/>
</dbReference>
<dbReference type="Bgee" id="ENSG00000137843">
    <property type="expression patterns" value="Expressed in gingival epithelium and 146 other cell types or tissues"/>
</dbReference>
<dbReference type="ExpressionAtlas" id="Q9NQU5">
    <property type="expression patterns" value="baseline and differential"/>
</dbReference>
<dbReference type="GO" id="GO:0030054">
    <property type="term" value="C:cell junction"/>
    <property type="evidence" value="ECO:0000314"/>
    <property type="project" value="HPA"/>
</dbReference>
<dbReference type="GO" id="GO:0005737">
    <property type="term" value="C:cytoplasm"/>
    <property type="evidence" value="ECO:0000318"/>
    <property type="project" value="GO_Central"/>
</dbReference>
<dbReference type="GO" id="GO:0005829">
    <property type="term" value="C:cytosol"/>
    <property type="evidence" value="ECO:0000304"/>
    <property type="project" value="Reactome"/>
</dbReference>
<dbReference type="GO" id="GO:0001650">
    <property type="term" value="C:fibrillar center"/>
    <property type="evidence" value="ECO:0000314"/>
    <property type="project" value="HPA"/>
</dbReference>
<dbReference type="GO" id="GO:0005654">
    <property type="term" value="C:nucleoplasm"/>
    <property type="evidence" value="ECO:0000314"/>
    <property type="project" value="HPA"/>
</dbReference>
<dbReference type="GO" id="GO:0014069">
    <property type="term" value="C:postsynaptic density"/>
    <property type="evidence" value="ECO:0007669"/>
    <property type="project" value="Ensembl"/>
</dbReference>
<dbReference type="GO" id="GO:0005524">
    <property type="term" value="F:ATP binding"/>
    <property type="evidence" value="ECO:0007669"/>
    <property type="project" value="UniProtKB-KW"/>
</dbReference>
<dbReference type="GO" id="GO:0045296">
    <property type="term" value="F:cadherin binding"/>
    <property type="evidence" value="ECO:0007005"/>
    <property type="project" value="BHF-UCL"/>
</dbReference>
<dbReference type="GO" id="GO:0106310">
    <property type="term" value="F:protein serine kinase activity"/>
    <property type="evidence" value="ECO:0007669"/>
    <property type="project" value="RHEA"/>
</dbReference>
<dbReference type="GO" id="GO:0004674">
    <property type="term" value="F:protein serine/threonine kinase activity"/>
    <property type="evidence" value="ECO:0000318"/>
    <property type="project" value="GO_Central"/>
</dbReference>
<dbReference type="GO" id="GO:0006915">
    <property type="term" value="P:apoptotic process"/>
    <property type="evidence" value="ECO:0000304"/>
    <property type="project" value="UniProtKB"/>
</dbReference>
<dbReference type="GO" id="GO:0009267">
    <property type="term" value="P:cellular response to starvation"/>
    <property type="evidence" value="ECO:0000318"/>
    <property type="project" value="GO_Central"/>
</dbReference>
<dbReference type="GO" id="GO:0007010">
    <property type="term" value="P:cytoskeleton organization"/>
    <property type="evidence" value="ECO:0000304"/>
    <property type="project" value="UniProtKB"/>
</dbReference>
<dbReference type="GO" id="GO:0035556">
    <property type="term" value="P:intracellular signal transduction"/>
    <property type="evidence" value="ECO:0000318"/>
    <property type="project" value="GO_Central"/>
</dbReference>
<dbReference type="GO" id="GO:0007612">
    <property type="term" value="P:learning"/>
    <property type="evidence" value="ECO:0007669"/>
    <property type="project" value="Ensembl"/>
</dbReference>
<dbReference type="GO" id="GO:0007626">
    <property type="term" value="P:locomotory behavior"/>
    <property type="evidence" value="ECO:0007669"/>
    <property type="project" value="Ensembl"/>
</dbReference>
<dbReference type="GO" id="GO:0007613">
    <property type="term" value="P:memory"/>
    <property type="evidence" value="ECO:0007669"/>
    <property type="project" value="Ensembl"/>
</dbReference>
<dbReference type="GO" id="GO:0140058">
    <property type="term" value="P:neuron projection arborization"/>
    <property type="evidence" value="ECO:0007669"/>
    <property type="project" value="Ensembl"/>
</dbReference>
<dbReference type="GO" id="GO:1990138">
    <property type="term" value="P:neuron projection extension"/>
    <property type="evidence" value="ECO:0007669"/>
    <property type="project" value="Ensembl"/>
</dbReference>
<dbReference type="GO" id="GO:0006355">
    <property type="term" value="P:regulation of DNA-templated transcription"/>
    <property type="evidence" value="ECO:0000304"/>
    <property type="project" value="UniProtKB"/>
</dbReference>
<dbReference type="GO" id="GO:0043408">
    <property type="term" value="P:regulation of MAPK cascade"/>
    <property type="evidence" value="ECO:0000318"/>
    <property type="project" value="GO_Central"/>
</dbReference>
<dbReference type="CDD" id="cd01093">
    <property type="entry name" value="CRIB_PAK_like"/>
    <property type="match status" value="1"/>
</dbReference>
<dbReference type="CDD" id="cd06659">
    <property type="entry name" value="STKc_PAK6"/>
    <property type="match status" value="1"/>
</dbReference>
<dbReference type="FunFam" id="1.10.510.10:FF:000073">
    <property type="entry name" value="Non-specific serine/threonine protein kinase"/>
    <property type="match status" value="1"/>
</dbReference>
<dbReference type="FunFam" id="3.30.200.20:FF:000141">
    <property type="entry name" value="Non-specific serine/threonine protein kinase"/>
    <property type="match status" value="1"/>
</dbReference>
<dbReference type="FunFam" id="3.90.810.10:FF:000002">
    <property type="entry name" value="Non-specific serine/threonine protein kinase"/>
    <property type="match status" value="1"/>
</dbReference>
<dbReference type="Gene3D" id="3.90.810.10">
    <property type="entry name" value="CRIB domain"/>
    <property type="match status" value="1"/>
</dbReference>
<dbReference type="Gene3D" id="3.30.200.20">
    <property type="entry name" value="Phosphorylase Kinase, domain 1"/>
    <property type="match status" value="1"/>
</dbReference>
<dbReference type="Gene3D" id="1.10.510.10">
    <property type="entry name" value="Transferase(Phosphotransferase) domain 1"/>
    <property type="match status" value="1"/>
</dbReference>
<dbReference type="InterPro" id="IPR000095">
    <property type="entry name" value="CRIB_dom"/>
</dbReference>
<dbReference type="InterPro" id="IPR036936">
    <property type="entry name" value="CRIB_dom_sf"/>
</dbReference>
<dbReference type="InterPro" id="IPR011009">
    <property type="entry name" value="Kinase-like_dom_sf"/>
</dbReference>
<dbReference type="InterPro" id="IPR051931">
    <property type="entry name" value="PAK3-like"/>
</dbReference>
<dbReference type="InterPro" id="IPR033923">
    <property type="entry name" value="PAK_BD"/>
</dbReference>
<dbReference type="InterPro" id="IPR000719">
    <property type="entry name" value="Prot_kinase_dom"/>
</dbReference>
<dbReference type="InterPro" id="IPR017441">
    <property type="entry name" value="Protein_kinase_ATP_BS"/>
</dbReference>
<dbReference type="InterPro" id="IPR035066">
    <property type="entry name" value="STKc_PAK6"/>
</dbReference>
<dbReference type="PANTHER" id="PTHR45832:SF3">
    <property type="entry name" value="NON-SPECIFIC SERINE_THREONINE PROTEIN KINASE"/>
    <property type="match status" value="1"/>
</dbReference>
<dbReference type="PANTHER" id="PTHR45832">
    <property type="entry name" value="SERINE/THREONINE-PROTEIN KINASE SAMKA-RELATED-RELATED"/>
    <property type="match status" value="1"/>
</dbReference>
<dbReference type="Pfam" id="PF00786">
    <property type="entry name" value="PBD"/>
    <property type="match status" value="1"/>
</dbReference>
<dbReference type="Pfam" id="PF00069">
    <property type="entry name" value="Pkinase"/>
    <property type="match status" value="1"/>
</dbReference>
<dbReference type="SMART" id="SM00285">
    <property type="entry name" value="PBD"/>
    <property type="match status" value="1"/>
</dbReference>
<dbReference type="SUPFAM" id="SSF56112">
    <property type="entry name" value="Protein kinase-like (PK-like)"/>
    <property type="match status" value="1"/>
</dbReference>
<dbReference type="PROSITE" id="PS50108">
    <property type="entry name" value="CRIB"/>
    <property type="match status" value="1"/>
</dbReference>
<dbReference type="PROSITE" id="PS00107">
    <property type="entry name" value="PROTEIN_KINASE_ATP"/>
    <property type="match status" value="1"/>
</dbReference>
<dbReference type="PROSITE" id="PS50011">
    <property type="entry name" value="PROTEIN_KINASE_DOM"/>
    <property type="match status" value="1"/>
</dbReference>
<gene>
    <name type="primary">PAK6</name>
    <name type="synonym">PAK5</name>
</gene>
<reference key="1">
    <citation type="journal article" date="2001" name="J. Biol. Chem.">
        <title>Androgen receptor specifically interacts with a novel p21-activated kinase, PAK6.</title>
        <authorList>
            <person name="Yang F."/>
            <person name="Li X."/>
            <person name="Sharma M."/>
            <person name="Zarnegar M."/>
            <person name="Lim B."/>
            <person name="Sun Z."/>
        </authorList>
    </citation>
    <scope>NUCLEOTIDE SEQUENCE [MRNA] (ISOFORM 1)</scope>
    <scope>TISSUE SPECIFICITY</scope>
    <scope>SUBCELLULAR LOCATION</scope>
    <scope>INTERACTION WITH AR</scope>
</reference>
<reference key="2">
    <citation type="submission" date="1999-02" db="EMBL/GenBank/DDBJ databases">
        <title>Pak5, a new member of the p21-activated kinase family, affects Cdc42 signalling to the actin cytoskeleton.</title>
        <authorList>
            <person name="Wagner T."/>
            <person name="Puls A."/>
            <person name="Frischauf A.M."/>
            <person name="Hall A."/>
        </authorList>
    </citation>
    <scope>NUCLEOTIDE SEQUENCE [MRNA] (ISOFORM 1)</scope>
</reference>
<reference key="3">
    <citation type="journal article" date="2004" name="Nat. Genet.">
        <title>Complete sequencing and characterization of 21,243 full-length human cDNAs.</title>
        <authorList>
            <person name="Ota T."/>
            <person name="Suzuki Y."/>
            <person name="Nishikawa T."/>
            <person name="Otsuki T."/>
            <person name="Sugiyama T."/>
            <person name="Irie R."/>
            <person name="Wakamatsu A."/>
            <person name="Hayashi K."/>
            <person name="Sato H."/>
            <person name="Nagai K."/>
            <person name="Kimura K."/>
            <person name="Makita H."/>
            <person name="Sekine M."/>
            <person name="Obayashi M."/>
            <person name="Nishi T."/>
            <person name="Shibahara T."/>
            <person name="Tanaka T."/>
            <person name="Ishii S."/>
            <person name="Yamamoto J."/>
            <person name="Saito K."/>
            <person name="Kawai Y."/>
            <person name="Isono Y."/>
            <person name="Nakamura Y."/>
            <person name="Nagahari K."/>
            <person name="Murakami K."/>
            <person name="Yasuda T."/>
            <person name="Iwayanagi T."/>
            <person name="Wagatsuma M."/>
            <person name="Shiratori A."/>
            <person name="Sudo H."/>
            <person name="Hosoiri T."/>
            <person name="Kaku Y."/>
            <person name="Kodaira H."/>
            <person name="Kondo H."/>
            <person name="Sugawara M."/>
            <person name="Takahashi M."/>
            <person name="Kanda K."/>
            <person name="Yokoi T."/>
            <person name="Furuya T."/>
            <person name="Kikkawa E."/>
            <person name="Omura Y."/>
            <person name="Abe K."/>
            <person name="Kamihara K."/>
            <person name="Katsuta N."/>
            <person name="Sato K."/>
            <person name="Tanikawa M."/>
            <person name="Yamazaki M."/>
            <person name="Ninomiya K."/>
            <person name="Ishibashi T."/>
            <person name="Yamashita H."/>
            <person name="Murakawa K."/>
            <person name="Fujimori K."/>
            <person name="Tanai H."/>
            <person name="Kimata M."/>
            <person name="Watanabe M."/>
            <person name="Hiraoka S."/>
            <person name="Chiba Y."/>
            <person name="Ishida S."/>
            <person name="Ono Y."/>
            <person name="Takiguchi S."/>
            <person name="Watanabe S."/>
            <person name="Yosida M."/>
            <person name="Hotuta T."/>
            <person name="Kusano J."/>
            <person name="Kanehori K."/>
            <person name="Takahashi-Fujii A."/>
            <person name="Hara H."/>
            <person name="Tanase T.-O."/>
            <person name="Nomura Y."/>
            <person name="Togiya S."/>
            <person name="Komai F."/>
            <person name="Hara R."/>
            <person name="Takeuchi K."/>
            <person name="Arita M."/>
            <person name="Imose N."/>
            <person name="Musashino K."/>
            <person name="Yuuki H."/>
            <person name="Oshima A."/>
            <person name="Sasaki N."/>
            <person name="Aotsuka S."/>
            <person name="Yoshikawa Y."/>
            <person name="Matsunawa H."/>
            <person name="Ichihara T."/>
            <person name="Shiohata N."/>
            <person name="Sano S."/>
            <person name="Moriya S."/>
            <person name="Momiyama H."/>
            <person name="Satoh N."/>
            <person name="Takami S."/>
            <person name="Terashima Y."/>
            <person name="Suzuki O."/>
            <person name="Nakagawa S."/>
            <person name="Senoh A."/>
            <person name="Mizoguchi H."/>
            <person name="Goto Y."/>
            <person name="Shimizu F."/>
            <person name="Wakebe H."/>
            <person name="Hishigaki H."/>
            <person name="Watanabe T."/>
            <person name="Sugiyama A."/>
            <person name="Takemoto M."/>
            <person name="Kawakami B."/>
            <person name="Yamazaki M."/>
            <person name="Watanabe K."/>
            <person name="Kumagai A."/>
            <person name="Itakura S."/>
            <person name="Fukuzumi Y."/>
            <person name="Fujimori Y."/>
            <person name="Komiyama M."/>
            <person name="Tashiro H."/>
            <person name="Tanigami A."/>
            <person name="Fujiwara T."/>
            <person name="Ono T."/>
            <person name="Yamada K."/>
            <person name="Fujii Y."/>
            <person name="Ozaki K."/>
            <person name="Hirao M."/>
            <person name="Ohmori Y."/>
            <person name="Kawabata A."/>
            <person name="Hikiji T."/>
            <person name="Kobatake N."/>
            <person name="Inagaki H."/>
            <person name="Ikema Y."/>
            <person name="Okamoto S."/>
            <person name="Okitani R."/>
            <person name="Kawakami T."/>
            <person name="Noguchi S."/>
            <person name="Itoh T."/>
            <person name="Shigeta K."/>
            <person name="Senba T."/>
            <person name="Matsumura K."/>
            <person name="Nakajima Y."/>
            <person name="Mizuno T."/>
            <person name="Morinaga M."/>
            <person name="Sasaki M."/>
            <person name="Togashi T."/>
            <person name="Oyama M."/>
            <person name="Hata H."/>
            <person name="Watanabe M."/>
            <person name="Komatsu T."/>
            <person name="Mizushima-Sugano J."/>
            <person name="Satoh T."/>
            <person name="Shirai Y."/>
            <person name="Takahashi Y."/>
            <person name="Nakagawa K."/>
            <person name="Okumura K."/>
            <person name="Nagase T."/>
            <person name="Nomura N."/>
            <person name="Kikuchi H."/>
            <person name="Masuho Y."/>
            <person name="Yamashita R."/>
            <person name="Nakai K."/>
            <person name="Yada T."/>
            <person name="Nakamura Y."/>
            <person name="Ohara O."/>
            <person name="Isogai T."/>
            <person name="Sugano S."/>
        </authorList>
    </citation>
    <scope>NUCLEOTIDE SEQUENCE [LARGE SCALE MRNA] (ISOFORMS 1 AND 2)</scope>
    <source>
        <tissue>Amygdala</tissue>
        <tissue>Brain</tissue>
        <tissue>Thalamus</tissue>
    </source>
</reference>
<reference key="4">
    <citation type="journal article" date="2006" name="Nature">
        <title>Analysis of the DNA sequence and duplication history of human chromosome 15.</title>
        <authorList>
            <person name="Zody M.C."/>
            <person name="Garber M."/>
            <person name="Sharpe T."/>
            <person name="Young S.K."/>
            <person name="Rowen L."/>
            <person name="O'Neill K."/>
            <person name="Whittaker C.A."/>
            <person name="Kamal M."/>
            <person name="Chang J.L."/>
            <person name="Cuomo C.A."/>
            <person name="Dewar K."/>
            <person name="FitzGerald M.G."/>
            <person name="Kodira C.D."/>
            <person name="Madan A."/>
            <person name="Qin S."/>
            <person name="Yang X."/>
            <person name="Abbasi N."/>
            <person name="Abouelleil A."/>
            <person name="Arachchi H.M."/>
            <person name="Baradarani L."/>
            <person name="Birditt B."/>
            <person name="Bloom S."/>
            <person name="Bloom T."/>
            <person name="Borowsky M.L."/>
            <person name="Burke J."/>
            <person name="Butler J."/>
            <person name="Cook A."/>
            <person name="DeArellano K."/>
            <person name="DeCaprio D."/>
            <person name="Dorris L. III"/>
            <person name="Dors M."/>
            <person name="Eichler E.E."/>
            <person name="Engels R."/>
            <person name="Fahey J."/>
            <person name="Fleetwood P."/>
            <person name="Friedman C."/>
            <person name="Gearin G."/>
            <person name="Hall J.L."/>
            <person name="Hensley G."/>
            <person name="Johnson E."/>
            <person name="Jones C."/>
            <person name="Kamat A."/>
            <person name="Kaur A."/>
            <person name="Locke D.P."/>
            <person name="Madan A."/>
            <person name="Munson G."/>
            <person name="Jaffe D.B."/>
            <person name="Lui A."/>
            <person name="Macdonald P."/>
            <person name="Mauceli E."/>
            <person name="Naylor J.W."/>
            <person name="Nesbitt R."/>
            <person name="Nicol R."/>
            <person name="O'Leary S.B."/>
            <person name="Ratcliffe A."/>
            <person name="Rounsley S."/>
            <person name="She X."/>
            <person name="Sneddon K.M.B."/>
            <person name="Stewart S."/>
            <person name="Sougnez C."/>
            <person name="Stone S.M."/>
            <person name="Topham K."/>
            <person name="Vincent D."/>
            <person name="Wang S."/>
            <person name="Zimmer A.R."/>
            <person name="Birren B.W."/>
            <person name="Hood L."/>
            <person name="Lander E.S."/>
            <person name="Nusbaum C."/>
        </authorList>
    </citation>
    <scope>NUCLEOTIDE SEQUENCE [LARGE SCALE GENOMIC DNA]</scope>
</reference>
<reference key="5">
    <citation type="submission" date="2005-07" db="EMBL/GenBank/DDBJ databases">
        <authorList>
            <person name="Mural R.J."/>
            <person name="Istrail S."/>
            <person name="Sutton G."/>
            <person name="Florea L."/>
            <person name="Halpern A.L."/>
            <person name="Mobarry C.M."/>
            <person name="Lippert R."/>
            <person name="Walenz B."/>
            <person name="Shatkay H."/>
            <person name="Dew I."/>
            <person name="Miller J.R."/>
            <person name="Flanigan M.J."/>
            <person name="Edwards N.J."/>
            <person name="Bolanos R."/>
            <person name="Fasulo D."/>
            <person name="Halldorsson B.V."/>
            <person name="Hannenhalli S."/>
            <person name="Turner R."/>
            <person name="Yooseph S."/>
            <person name="Lu F."/>
            <person name="Nusskern D.R."/>
            <person name="Shue B.C."/>
            <person name="Zheng X.H."/>
            <person name="Zhong F."/>
            <person name="Delcher A.L."/>
            <person name="Huson D.H."/>
            <person name="Kravitz S.A."/>
            <person name="Mouchard L."/>
            <person name="Reinert K."/>
            <person name="Remington K.A."/>
            <person name="Clark A.G."/>
            <person name="Waterman M.S."/>
            <person name="Eichler E.E."/>
            <person name="Adams M.D."/>
            <person name="Hunkapiller M.W."/>
            <person name="Myers E.W."/>
            <person name="Venter J.C."/>
        </authorList>
    </citation>
    <scope>NUCLEOTIDE SEQUENCE [LARGE SCALE GENOMIC DNA]</scope>
</reference>
<reference key="6">
    <citation type="journal article" date="2004" name="Genome Res.">
        <title>The status, quality, and expansion of the NIH full-length cDNA project: the Mammalian Gene Collection (MGC).</title>
        <authorList>
            <consortium name="The MGC Project Team"/>
        </authorList>
    </citation>
    <scope>NUCLEOTIDE SEQUENCE [LARGE SCALE MRNA] (ISOFORM 1)</scope>
    <source>
        <tissue>Brain</tissue>
    </source>
</reference>
<reference key="7">
    <citation type="journal article" date="2002" name="Mol. Endocrinol.">
        <title>AR and ER interaction with a p21-activated kinase (PAK6).</title>
        <authorList>
            <person name="Lee S.R."/>
            <person name="Ramos S.M."/>
            <person name="Ko A."/>
            <person name="Masiello D."/>
            <person name="Swanson K.D."/>
            <person name="Lu M.L."/>
            <person name="Balk S.P."/>
        </authorList>
    </citation>
    <scope>TISSUE SPECIFICITY</scope>
    <scope>SUBCELLULAR LOCATION</scope>
    <scope>INTERACTION WITH AR AND ESR1</scope>
</reference>
<reference key="8">
    <citation type="journal article" date="2004" name="J. Biol. Chem.">
        <title>Mechanism of p21-activated kinase 6-mediated inhibition of androgen receptor signaling.</title>
        <authorList>
            <person name="Schrantz N."/>
            <person name="da Silva Correia J."/>
            <person name="Fowler B."/>
            <person name="Ge Q."/>
            <person name="Sun Z."/>
            <person name="Bokoch G.M."/>
        </authorList>
    </citation>
    <scope>FUNCTION IN PHOSPHORYLATION OF AR</scope>
</reference>
<reference key="9">
    <citation type="journal article" date="2005" name="J. Biol. Chem.">
        <title>Activation of p21-activated kinase 6 by MAP kinase kinase 6 and p38 MAP kinase.</title>
        <authorList>
            <person name="Kaur R."/>
            <person name="Liu X."/>
            <person name="Gjoerup O."/>
            <person name="Zhang A."/>
            <person name="Yuan X."/>
            <person name="Balk S.P."/>
            <person name="Schneider M.C."/>
            <person name="Lu M.L."/>
        </authorList>
    </citation>
    <scope>PHOSPHORYLATION BY MAP2K6</scope>
    <scope>AUTOPHOSPHORYLATION</scope>
    <scope>MUTAGENESIS OF SER-165; SER-560 AND TYR-566</scope>
</reference>
<reference key="10">
    <citation type="journal article" date="2008" name="Prostate">
        <title>Increased PAK6 expression in prostate cancer and identification of PAK6 associated proteins.</title>
        <authorList>
            <person name="Kaur R."/>
            <person name="Yuan X."/>
            <person name="Lu M.L."/>
            <person name="Balk S.P."/>
        </authorList>
    </citation>
    <scope>INTERACTION WITH IQGAP1 AND PPM1B</scope>
</reference>
<reference key="11">
    <citation type="journal article" date="2010" name="Prostate">
        <title>Inhibition of p21-activated kinase 6 (PAK6) increases radiosensitivity of prostate cancer cells.</title>
        <authorList>
            <person name="Zhang M."/>
            <person name="Siedow M."/>
            <person name="Saia G."/>
            <person name="Chakravarti A."/>
        </authorList>
    </citation>
    <scope>FUNCTION</scope>
</reference>
<reference key="12">
    <citation type="submission" date="2006-02" db="EMBL/GenBank/DDBJ databases">
        <title>Crystal structure of the human p21-activated kinase 6.</title>
        <authorList>
            <person name="Filippakopoulos P."/>
            <person name="Berridge G."/>
            <person name="Bray J."/>
            <person name="Burgess N."/>
            <person name="Colebrook S."/>
            <person name="Das S."/>
            <person name="Eswaran J."/>
            <person name="Gileadi O."/>
            <person name="Papagrigoriou E."/>
            <person name="Savitsky P."/>
            <person name="Smee C."/>
            <person name="Turnbull A."/>
            <person name="Sundstrom M."/>
            <person name="Arrowsmith C."/>
            <person name="Weigelt J."/>
            <person name="Edwards A."/>
            <person name="Von Delft F."/>
            <person name="Knapp S."/>
        </authorList>
    </citation>
    <scope>X-RAY CRYSTALLOGRAPHY (1.6 ANGSTROMS) OF 383-681</scope>
    <scope>PHOSPHORYLATION AT SER-560</scope>
</reference>
<reference key="13">
    <citation type="submission" date="2007-01" db="PDB data bank">
        <title>The crystal structure of human CDC42 in complex with the CRIB domain of human p21-activated kinase 6 (PAK6).</title>
        <authorList>
            <consortium name="Structural genomics consortium (SGC)"/>
        </authorList>
    </citation>
    <scope>X-RAY CRYSTALLOGRAPHY (2.4 ANGSTROMS) OF 11-45 IN COMPLEX WITH CDC42</scope>
</reference>
<reference key="14">
    <citation type="journal article" date="2006" name="Science">
        <title>The consensus coding sequences of human breast and colorectal cancers.</title>
        <authorList>
            <person name="Sjoeblom T."/>
            <person name="Jones S."/>
            <person name="Wood L.D."/>
            <person name="Parsons D.W."/>
            <person name="Lin J."/>
            <person name="Barber T.D."/>
            <person name="Mandelker D."/>
            <person name="Leary R.J."/>
            <person name="Ptak J."/>
            <person name="Silliman N."/>
            <person name="Szabo S."/>
            <person name="Buckhaults P."/>
            <person name="Farrell C."/>
            <person name="Meeh P."/>
            <person name="Markowitz S.D."/>
            <person name="Willis J."/>
            <person name="Dawson D."/>
            <person name="Willson J.K.V."/>
            <person name="Gazdar A.F."/>
            <person name="Hartigan J."/>
            <person name="Wu L."/>
            <person name="Liu C."/>
            <person name="Parmigiani G."/>
            <person name="Park B.H."/>
            <person name="Bachman K.E."/>
            <person name="Papadopoulos N."/>
            <person name="Vogelstein B."/>
            <person name="Kinzler K.W."/>
            <person name="Velculescu V.E."/>
        </authorList>
    </citation>
    <scope>VARIANT [LARGE SCALE ANALYSIS] HIS-3</scope>
</reference>
<reference key="15">
    <citation type="journal article" date="2007" name="Nature">
        <title>Patterns of somatic mutation in human cancer genomes.</title>
        <authorList>
            <person name="Greenman C."/>
            <person name="Stephens P."/>
            <person name="Smith R."/>
            <person name="Dalgliesh G.L."/>
            <person name="Hunter C."/>
            <person name="Bignell G."/>
            <person name="Davies H."/>
            <person name="Teague J."/>
            <person name="Butler A."/>
            <person name="Stevens C."/>
            <person name="Edkins S."/>
            <person name="O'Meara S."/>
            <person name="Vastrik I."/>
            <person name="Schmidt E.E."/>
            <person name="Avis T."/>
            <person name="Barthorpe S."/>
            <person name="Bhamra G."/>
            <person name="Buck G."/>
            <person name="Choudhury B."/>
            <person name="Clements J."/>
            <person name="Cole J."/>
            <person name="Dicks E."/>
            <person name="Forbes S."/>
            <person name="Gray K."/>
            <person name="Halliday K."/>
            <person name="Harrison R."/>
            <person name="Hills K."/>
            <person name="Hinton J."/>
            <person name="Jenkinson A."/>
            <person name="Jones D."/>
            <person name="Menzies A."/>
            <person name="Mironenko T."/>
            <person name="Perry J."/>
            <person name="Raine K."/>
            <person name="Richardson D."/>
            <person name="Shepherd R."/>
            <person name="Small A."/>
            <person name="Tofts C."/>
            <person name="Varian J."/>
            <person name="Webb T."/>
            <person name="West S."/>
            <person name="Widaa S."/>
            <person name="Yates A."/>
            <person name="Cahill D.P."/>
            <person name="Louis D.N."/>
            <person name="Goldstraw P."/>
            <person name="Nicholson A.G."/>
            <person name="Brasseur F."/>
            <person name="Looijenga L."/>
            <person name="Weber B.L."/>
            <person name="Chiew Y.-E."/>
            <person name="DeFazio A."/>
            <person name="Greaves M.F."/>
            <person name="Green A.R."/>
            <person name="Campbell P."/>
            <person name="Birney E."/>
            <person name="Easton D.F."/>
            <person name="Chenevix-Trench G."/>
            <person name="Tan M.-H."/>
            <person name="Khoo S.K."/>
            <person name="Teh B.T."/>
            <person name="Yuen S.T."/>
            <person name="Leung S.Y."/>
            <person name="Wooster R."/>
            <person name="Futreal P.A."/>
            <person name="Stratton M.R."/>
        </authorList>
    </citation>
    <scope>VARIANTS [LARGE SCALE ANALYSIS] VAL-76; LYS-184; GLU-205; THR-208; MET-210; ARG-215; LEU-337; VAL-376 AND ARG-514</scope>
</reference>
<evidence type="ECO:0000250" key="1"/>
<evidence type="ECO:0000255" key="2">
    <source>
        <dbReference type="PROSITE-ProRule" id="PRU00057"/>
    </source>
</evidence>
<evidence type="ECO:0000255" key="3">
    <source>
        <dbReference type="PROSITE-ProRule" id="PRU00159"/>
    </source>
</evidence>
<evidence type="ECO:0000256" key="4">
    <source>
        <dbReference type="SAM" id="MobiDB-lite"/>
    </source>
</evidence>
<evidence type="ECO:0000269" key="5">
    <source>
    </source>
</evidence>
<evidence type="ECO:0000269" key="6">
    <source>
    </source>
</evidence>
<evidence type="ECO:0000269" key="7">
    <source>
    </source>
</evidence>
<evidence type="ECO:0000269" key="8">
    <source>
    </source>
</evidence>
<evidence type="ECO:0000269" key="9">
    <source>
    </source>
</evidence>
<evidence type="ECO:0000269" key="10">
    <source>
    </source>
</evidence>
<evidence type="ECO:0000269" key="11">
    <source>
    </source>
</evidence>
<evidence type="ECO:0000269" key="12">
    <source>
    </source>
</evidence>
<evidence type="ECO:0000269" key="13">
    <source ref="12"/>
</evidence>
<evidence type="ECO:0000269" key="14">
    <source ref="13"/>
</evidence>
<evidence type="ECO:0000303" key="15">
    <source>
    </source>
</evidence>
<evidence type="ECO:0000305" key="16"/>
<evidence type="ECO:0007829" key="17">
    <source>
        <dbReference type="PDB" id="2C30"/>
    </source>
</evidence>
<evidence type="ECO:0007829" key="18">
    <source>
        <dbReference type="PDB" id="2ODB"/>
    </source>
</evidence>
<evidence type="ECO:0007829" key="19">
    <source>
        <dbReference type="PDB" id="4KS7"/>
    </source>
</evidence>
<keyword id="KW-0002">3D-structure</keyword>
<keyword id="KW-0025">Alternative splicing</keyword>
<keyword id="KW-0067">ATP-binding</keyword>
<keyword id="KW-0963">Cytoplasm</keyword>
<keyword id="KW-0418">Kinase</keyword>
<keyword id="KW-0547">Nucleotide-binding</keyword>
<keyword id="KW-0539">Nucleus</keyword>
<keyword id="KW-0597">Phosphoprotein</keyword>
<keyword id="KW-1267">Proteomics identification</keyword>
<keyword id="KW-1185">Reference proteome</keyword>
<keyword id="KW-0723">Serine/threonine-protein kinase</keyword>
<keyword id="KW-0808">Transferase</keyword>
<proteinExistence type="evidence at protein level"/>